<feature type="signal peptide" evidence="3">
    <location>
        <begin position="1"/>
        <end position="27"/>
    </location>
</feature>
<feature type="propeptide" id="PRO_0000400980" evidence="1">
    <location>
        <begin position="28"/>
        <end position="33"/>
    </location>
</feature>
<feature type="peptide" id="PRO_0000400981" description="Kunitz-type U15-theraphotoxin-Hhn1b">
    <location>
        <begin position="34"/>
        <end position="88"/>
    </location>
</feature>
<feature type="domain" description="BPTI/Kunitz inhibitor" evidence="4">
    <location>
        <begin position="37"/>
        <end position="85"/>
    </location>
</feature>
<feature type="site" description="Reactive bond for chymotrypsin" evidence="1">
    <location>
        <begin position="47"/>
        <end position="48"/>
    </location>
</feature>
<feature type="disulfide bond" evidence="4">
    <location>
        <begin position="37"/>
        <end position="85"/>
    </location>
</feature>
<feature type="disulfide bond" evidence="4">
    <location>
        <begin position="60"/>
        <end position="81"/>
    </location>
</feature>
<name>VKT2_CYRHA</name>
<protein>
    <recommendedName>
        <fullName>Kunitz-type U15-theraphotoxin-Hhn1b</fullName>
        <shortName>U15-TRTX-Hhn1b</shortName>
    </recommendedName>
    <alternativeName>
        <fullName>Kunitz-type serine protease inhibitor hainantoxin-XI-2</fullName>
        <shortName>HNTX-XI-2</shortName>
    </alternativeName>
</protein>
<keyword id="KW-1015">Disulfide bond</keyword>
<keyword id="KW-0646">Protease inhibitor</keyword>
<keyword id="KW-0964">Secreted</keyword>
<keyword id="KW-0722">Serine protease inhibitor</keyword>
<keyword id="KW-0732">Signal</keyword>
<accession>D2Y2F3</accession>
<evidence type="ECO:0000250" key="1"/>
<evidence type="ECO:0000250" key="2">
    <source>
        <dbReference type="UniProtKB" id="P68425"/>
    </source>
</evidence>
<evidence type="ECO:0000255" key="3"/>
<evidence type="ECO:0000255" key="4">
    <source>
        <dbReference type="PROSITE-ProRule" id="PRU00031"/>
    </source>
</evidence>
<evidence type="ECO:0000305" key="5"/>
<evidence type="ECO:0000305" key="6">
    <source>
    </source>
</evidence>
<reference key="1">
    <citation type="journal article" date="2010" name="J. Proteome Res.">
        <title>Molecular diversification of peptide toxins from the tarantula Haplopelma hainanum (Ornithoctonus hainana) venom based on transcriptomic, peptidomic, and genomic analyses.</title>
        <authorList>
            <person name="Tang X."/>
            <person name="Zhang Y."/>
            <person name="Hu W."/>
            <person name="Xu D."/>
            <person name="Tao H."/>
            <person name="Yang X."/>
            <person name="Li Y."/>
            <person name="Jiang L."/>
            <person name="Liang S."/>
        </authorList>
    </citation>
    <scope>NUCLEOTIDE SEQUENCE [LARGE SCALE MRNA]</scope>
    <source>
        <tissue>Venom gland</tissue>
    </source>
</reference>
<sequence>MGTARFLRAVLLLSVLLMVTFPALLSAEHHDGRVDICRLPSDSGDCLRFFEMWYFDGTTCTKFVYGGYGGNDNRFPTEKACVKRCAKA</sequence>
<dbReference type="EMBL" id="GU293030">
    <property type="protein sequence ID" value="ADB56846.1"/>
    <property type="molecule type" value="mRNA"/>
</dbReference>
<dbReference type="SMR" id="D2Y2F3"/>
<dbReference type="ArachnoServer" id="AS001598">
    <property type="toxin name" value="U15-theraphotoxin-Hhn1b"/>
</dbReference>
<dbReference type="GO" id="GO:0005576">
    <property type="term" value="C:extracellular region"/>
    <property type="evidence" value="ECO:0007669"/>
    <property type="project" value="UniProtKB-SubCell"/>
</dbReference>
<dbReference type="GO" id="GO:0015459">
    <property type="term" value="F:potassium channel regulator activity"/>
    <property type="evidence" value="ECO:0007669"/>
    <property type="project" value="UniProtKB-KW"/>
</dbReference>
<dbReference type="GO" id="GO:0004867">
    <property type="term" value="F:serine-type endopeptidase inhibitor activity"/>
    <property type="evidence" value="ECO:0007669"/>
    <property type="project" value="UniProtKB-KW"/>
</dbReference>
<dbReference type="GO" id="GO:0090729">
    <property type="term" value="F:toxin activity"/>
    <property type="evidence" value="ECO:0007669"/>
    <property type="project" value="UniProtKB-KW"/>
</dbReference>
<dbReference type="GO" id="GO:0044562">
    <property type="term" value="P:envenomation resulting in negative regulation of voltage-gated potassium channel activity in another organism"/>
    <property type="evidence" value="ECO:0007669"/>
    <property type="project" value="UniProtKB-ARBA"/>
</dbReference>
<dbReference type="CDD" id="cd22598">
    <property type="entry name" value="Kunitz_huwentoxin"/>
    <property type="match status" value="1"/>
</dbReference>
<dbReference type="FunFam" id="4.10.410.10:FF:000020">
    <property type="entry name" value="Collagen, type VI, alpha 3"/>
    <property type="match status" value="1"/>
</dbReference>
<dbReference type="Gene3D" id="4.10.410.10">
    <property type="entry name" value="Pancreatic trypsin inhibitor Kunitz domain"/>
    <property type="match status" value="1"/>
</dbReference>
<dbReference type="InterPro" id="IPR002223">
    <property type="entry name" value="Kunitz_BPTI"/>
</dbReference>
<dbReference type="InterPro" id="IPR036880">
    <property type="entry name" value="Kunitz_BPTI_sf"/>
</dbReference>
<dbReference type="InterPro" id="IPR051388">
    <property type="entry name" value="Serpin_venom_toxin"/>
</dbReference>
<dbReference type="PANTHER" id="PTHR46751">
    <property type="entry name" value="EPPIN"/>
    <property type="match status" value="1"/>
</dbReference>
<dbReference type="PANTHER" id="PTHR46751:SF1">
    <property type="entry name" value="WAP FOUR-DISULFIDE CORE DOMAIN PROTEIN 6A"/>
    <property type="match status" value="1"/>
</dbReference>
<dbReference type="Pfam" id="PF00014">
    <property type="entry name" value="Kunitz_BPTI"/>
    <property type="match status" value="1"/>
</dbReference>
<dbReference type="PRINTS" id="PR00759">
    <property type="entry name" value="BASICPTASE"/>
</dbReference>
<dbReference type="SMART" id="SM00131">
    <property type="entry name" value="KU"/>
    <property type="match status" value="1"/>
</dbReference>
<dbReference type="SUPFAM" id="SSF57362">
    <property type="entry name" value="BPTI-like"/>
    <property type="match status" value="1"/>
</dbReference>
<dbReference type="PROSITE" id="PS50279">
    <property type="entry name" value="BPTI_KUNITZ_2"/>
    <property type="match status" value="1"/>
</dbReference>
<comment type="function">
    <text evidence="2">Serine protease inhibitor that inhibits trypsin at a molar ratio of 1:1.</text>
</comment>
<comment type="subcellular location">
    <subcellularLocation>
        <location evidence="6">Secreted</location>
    </subcellularLocation>
</comment>
<comment type="tissue specificity">
    <text evidence="6">Expressed by the venom gland.</text>
</comment>
<comment type="similarity">
    <text evidence="5">Belongs to the venom Kunitz-type family. 03 (sub-Kunitz) subfamily.</text>
</comment>
<proteinExistence type="inferred from homology"/>
<organism>
    <name type="scientific">Cyriopagopus hainanus</name>
    <name type="common">Chinese bird spider</name>
    <name type="synonym">Haplopelma hainanum</name>
    <dbReference type="NCBI Taxonomy" id="209901"/>
    <lineage>
        <taxon>Eukaryota</taxon>
        <taxon>Metazoa</taxon>
        <taxon>Ecdysozoa</taxon>
        <taxon>Arthropoda</taxon>
        <taxon>Chelicerata</taxon>
        <taxon>Arachnida</taxon>
        <taxon>Araneae</taxon>
        <taxon>Mygalomorphae</taxon>
        <taxon>Theraphosidae</taxon>
        <taxon>Haplopelma</taxon>
    </lineage>
</organism>